<name>DPOLA_ARATH</name>
<feature type="chain" id="PRO_0000046437" description="DNA polymerase alpha catalytic subunit">
    <location>
        <begin position="1"/>
        <end position="1524"/>
    </location>
</feature>
<feature type="zinc finger region" description="CysA-type">
    <location>
        <begin position="1333"/>
        <end position="1378"/>
    </location>
</feature>
<feature type="region of interest" description="Disordered" evidence="3">
    <location>
        <begin position="1"/>
        <end position="53"/>
    </location>
</feature>
<feature type="region of interest" description="Disordered" evidence="3">
    <location>
        <begin position="68"/>
        <end position="139"/>
    </location>
</feature>
<feature type="short sequence motif" description="CysB motif">
    <location>
        <begin position="1414"/>
        <end position="1446"/>
    </location>
</feature>
<feature type="compositionally biased region" description="Basic and acidic residues" evidence="3">
    <location>
        <begin position="20"/>
        <end position="30"/>
    </location>
</feature>
<feature type="compositionally biased region" description="Acidic residues" evidence="3">
    <location>
        <begin position="79"/>
        <end position="96"/>
    </location>
</feature>
<feature type="binding site" evidence="2">
    <location>
        <position position="1333"/>
    </location>
    <ligand>
        <name>Zn(2+)</name>
        <dbReference type="ChEBI" id="CHEBI:29105"/>
        <label>1</label>
    </ligand>
</feature>
<feature type="binding site" evidence="2">
    <location>
        <position position="1336"/>
    </location>
    <ligand>
        <name>Zn(2+)</name>
        <dbReference type="ChEBI" id="CHEBI:29105"/>
        <label>1</label>
    </ligand>
</feature>
<feature type="binding site" evidence="4">
    <location>
        <position position="1375"/>
    </location>
    <ligand>
        <name>Zn(2+)</name>
        <dbReference type="ChEBI" id="CHEBI:29105"/>
        <label>1</label>
    </ligand>
</feature>
<feature type="binding site" evidence="2">
    <location>
        <position position="1378"/>
    </location>
    <ligand>
        <name>Zn(2+)</name>
        <dbReference type="ChEBI" id="CHEBI:29105"/>
        <label>1</label>
    </ligand>
</feature>
<feature type="binding site" evidence="2">
    <location>
        <position position="1414"/>
    </location>
    <ligand>
        <name>Zn(2+)</name>
        <dbReference type="ChEBI" id="CHEBI:29105"/>
        <label>2</label>
    </ligand>
</feature>
<feature type="binding site" evidence="2">
    <location>
        <position position="1419"/>
    </location>
    <ligand>
        <name>Zn(2+)</name>
        <dbReference type="ChEBI" id="CHEBI:29105"/>
        <label>2</label>
    </ligand>
</feature>
<feature type="binding site" evidence="2">
    <location>
        <position position="1440"/>
    </location>
    <ligand>
        <name>Zn(2+)</name>
        <dbReference type="ChEBI" id="CHEBI:29105"/>
        <label>2</label>
    </ligand>
</feature>
<feature type="binding site" evidence="4">
    <location>
        <position position="1446"/>
    </location>
    <ligand>
        <name>Zn(2+)</name>
        <dbReference type="ChEBI" id="CHEBI:29105"/>
        <label>2</label>
    </ligand>
</feature>
<evidence type="ECO:0000250" key="1"/>
<evidence type="ECO:0000250" key="2">
    <source>
        <dbReference type="UniProtKB" id="P09884"/>
    </source>
</evidence>
<evidence type="ECO:0000256" key="3">
    <source>
        <dbReference type="SAM" id="MobiDB-lite"/>
    </source>
</evidence>
<evidence type="ECO:0000305" key="4"/>
<accession>Q9FHA3</accession>
<accession>F4K285</accession>
<keyword id="KW-0235">DNA replication</keyword>
<keyword id="KW-0238">DNA-binding</keyword>
<keyword id="KW-0239">DNA-directed DNA polymerase</keyword>
<keyword id="KW-0479">Metal-binding</keyword>
<keyword id="KW-0548">Nucleotidyltransferase</keyword>
<keyword id="KW-0539">Nucleus</keyword>
<keyword id="KW-1185">Reference proteome</keyword>
<keyword id="KW-0808">Transferase</keyword>
<keyword id="KW-0862">Zinc</keyword>
<keyword id="KW-0863">Zinc-finger</keyword>
<reference key="1">
    <citation type="journal article" date="2000" name="DNA Res.">
        <title>Structural analysis of Arabidopsis thaliana chromosome 5. X. Sequence features of the regions of 3,076,755 bp covered by sixty P1 and TAC clones.</title>
        <authorList>
            <person name="Sato S."/>
            <person name="Nakamura Y."/>
            <person name="Kaneko T."/>
            <person name="Katoh T."/>
            <person name="Asamizu E."/>
            <person name="Kotani H."/>
            <person name="Tabata S."/>
        </authorList>
    </citation>
    <scope>NUCLEOTIDE SEQUENCE [LARGE SCALE GENOMIC DNA]</scope>
    <source>
        <strain>cv. Columbia</strain>
    </source>
</reference>
<reference key="2">
    <citation type="journal article" date="2017" name="Plant J.">
        <title>Araport11: a complete reannotation of the Arabidopsis thaliana reference genome.</title>
        <authorList>
            <person name="Cheng C.Y."/>
            <person name="Krishnakumar V."/>
            <person name="Chan A.P."/>
            <person name="Thibaud-Nissen F."/>
            <person name="Schobel S."/>
            <person name="Town C.D."/>
        </authorList>
    </citation>
    <scope>GENOME REANNOTATION</scope>
    <source>
        <strain>cv. Columbia</strain>
    </source>
</reference>
<protein>
    <recommendedName>
        <fullName>DNA polymerase alpha catalytic subunit</fullName>
        <ecNumber>2.7.7.7</ecNumber>
    </recommendedName>
</protein>
<comment type="function">
    <text>Polymerase alpha in a complex with DNA primase is a replicative polymerase.</text>
</comment>
<comment type="catalytic activity">
    <reaction>
        <text>DNA(n) + a 2'-deoxyribonucleoside 5'-triphosphate = DNA(n+1) + diphosphate</text>
        <dbReference type="Rhea" id="RHEA:22508"/>
        <dbReference type="Rhea" id="RHEA-COMP:17339"/>
        <dbReference type="Rhea" id="RHEA-COMP:17340"/>
        <dbReference type="ChEBI" id="CHEBI:33019"/>
        <dbReference type="ChEBI" id="CHEBI:61560"/>
        <dbReference type="ChEBI" id="CHEBI:173112"/>
        <dbReference type="EC" id="2.7.7.7"/>
    </reaction>
</comment>
<comment type="subcellular location">
    <subcellularLocation>
        <location evidence="1">Nucleus</location>
    </subcellularLocation>
</comment>
<comment type="miscellaneous">
    <text>In eukaryotes there are five DNA polymerases: alpha, beta, gamma, delta, and epsilon which are responsible for different reactions of DNA synthesis.</text>
</comment>
<comment type="similarity">
    <text evidence="4">Belongs to the DNA polymerase type-B family.</text>
</comment>
<comment type="sequence caution" evidence="4">
    <conflict type="erroneous gene model prediction">
        <sequence resource="EMBL-CDS" id="BAB10944"/>
    </conflict>
</comment>
<sequence length="1524" mass="170479">MSGDNSTETGRRRSRGAEASSRKDTLERLKAIRQGGIRSASGGGYDIRLQKPIFDTVDDEEYDALVSRRREEARGFVVEDGEGGDLGYLDEGEEEDWSKPSGPESTDESDDGGRFSGRLKKKKKGKEQTQQPQVKKVNPALKAAATITGEGRLSSMFTSSSFKKVKETDKAQYEGILDEIIAQVTPDESDRKKHTRRKLPGTVPVTIFKNKKLFSVASSMGMKESEPTPSTYEGDSVSMDNELMKEEDMKESEVIPSETMELLGSDIVKEDGSNKIRKTEVKSELGVKEVFTLNATIDMKEKDSALSATAGWKEAMGKVGTENGALLGSSSEGKTEFDLDADGSLRFFILDAYEEAFGASMGTIYLFGKVKMGDTYKSCCVVVKNIQRCVYAIPNDSIFPSHELIMLEQEVKDSRLSPESFRGKLHEMASKLKNEIAQELLQLNVSNFSMAPVKRNYAFERPDVPAGEQYVLKINYSFKDRPLPEDLKGESFSALLGSHTSALEHFILKRKIMGPCWLKISSFSTCSPSEGVSWCKFEVTVQSPKDITILVSEEKVVHPPAVVTAINLKTIVNEKQNISEIVSASVLCFHNAKIDVPMPAPERKRSGILSHFTVVRNPEGTGYPIGWKKEVSDRNSKNGCNVLSIENSERALLNRLFLELNKLDSDILVGHNISGFDLDVLLQRAQACKVQSSMWSKIGRLKRSFMPKLKGNSNYGSGATPGLMSCIAGRLLCDTDLCSRDLLKEVSYSLTDLSKTQLNRDRKEIAPNDIPKMFQSSKTLVELIECGETDAWLSMELMFHLSVLPLTLQLTNISGNLWGKTLQGARAQRIEYYLLHTFHSKKFILPDKISQRMKEIKSSKRRMDYAPEDRNVDELDADLTLENDPSKGSKTKKGPAYAGGLVLEPKRGLYDKYVLLLDFNSLYPSIIQEYNICFTTIPRSEDGVPRLPSSQTPGILPKLMEHLVSIRKSVKLKMKKETGLKYWELDIRQQALKLTANSMYGCLGFSNSRFYAKPLAELITLQGRDILQRTVDLVQNHLNLEVIYGDTDSIMIHSGLDDIEEVKAIKSKVIQEVNKKYRCLKIDCDGIYKRMLLLRKKKYAAVKLQFKDGKPCEDIERKGVDMVRRDWSLLSKEIGDLCLSKILYGGSCEDVVEAIHNELMKIKEEMRNGQVALEKYVITKTLTKPPAAYPDSKSQPHVQVALRMRQRGYKEGFNAKDTVPYIICYEQGNASSASSAGIAERARHPDEVKSEGSRWLVDIDYYLAQQIHPVVSRLCAEIQGTSPERLAECLGLDPSKYRSKSNDATSSDPSTSLLFATSDEERYKSCEPLALTCPSCSTAFNCPSIISSVCASISKKPATPETEESDSTFWLKLHCPKCQQEDSTGIISPAMIANQVKRQIDGFVSMYYKGIMVCEDESCKHTTRSPNFRLLGERERGTVCPNYPNCNGTLLRKYTEADLYKQLSYFCHILDTQCSLEKMDVGVRIQVEKAMTKIRPAVKSAAAITRSSRDRCAYGWMQLTDIVI</sequence>
<gene>
    <name type="primary">POLA</name>
    <name type="ordered locus">At5g67100</name>
    <name type="ORF">K21H1.14</name>
</gene>
<proteinExistence type="inferred from homology"/>
<organism>
    <name type="scientific">Arabidopsis thaliana</name>
    <name type="common">Mouse-ear cress</name>
    <dbReference type="NCBI Taxonomy" id="3702"/>
    <lineage>
        <taxon>Eukaryota</taxon>
        <taxon>Viridiplantae</taxon>
        <taxon>Streptophyta</taxon>
        <taxon>Embryophyta</taxon>
        <taxon>Tracheophyta</taxon>
        <taxon>Spermatophyta</taxon>
        <taxon>Magnoliopsida</taxon>
        <taxon>eudicotyledons</taxon>
        <taxon>Gunneridae</taxon>
        <taxon>Pentapetalae</taxon>
        <taxon>rosids</taxon>
        <taxon>malvids</taxon>
        <taxon>Brassicales</taxon>
        <taxon>Brassicaceae</taxon>
        <taxon>Camelineae</taxon>
        <taxon>Arabidopsis</taxon>
    </lineage>
</organism>
<dbReference type="EC" id="2.7.7.7"/>
<dbReference type="EMBL" id="AB020742">
    <property type="protein sequence ID" value="BAB10944.1"/>
    <property type="status" value="ALT_SEQ"/>
    <property type="molecule type" value="Genomic_DNA"/>
</dbReference>
<dbReference type="EMBL" id="CP002688">
    <property type="protein sequence ID" value="AED98300.1"/>
    <property type="molecule type" value="Genomic_DNA"/>
</dbReference>
<dbReference type="EMBL" id="CP002688">
    <property type="protein sequence ID" value="ANM70090.1"/>
    <property type="molecule type" value="Genomic_DNA"/>
</dbReference>
<dbReference type="RefSeq" id="NP_001331725.1">
    <property type="nucleotide sequence ID" value="NM_001345811.1"/>
</dbReference>
<dbReference type="RefSeq" id="NP_201511.2">
    <property type="nucleotide sequence ID" value="NM_126110.3"/>
</dbReference>
<dbReference type="SMR" id="Q9FHA3"/>
<dbReference type="BioGRID" id="22087">
    <property type="interactions" value="5"/>
</dbReference>
<dbReference type="FunCoup" id="Q9FHA3">
    <property type="interactions" value="3489"/>
</dbReference>
<dbReference type="STRING" id="3702.Q9FHA3"/>
<dbReference type="GlyGen" id="Q9FHA3">
    <property type="glycosylation" value="2 sites"/>
</dbReference>
<dbReference type="iPTMnet" id="Q9FHA3"/>
<dbReference type="PaxDb" id="3702-AT5G67100.1"/>
<dbReference type="ProteomicsDB" id="222159"/>
<dbReference type="EnsemblPlants" id="AT5G67100.1">
    <property type="protein sequence ID" value="AT5G67100.1"/>
    <property type="gene ID" value="AT5G67100"/>
</dbReference>
<dbReference type="EnsemblPlants" id="AT5G67100.2">
    <property type="protein sequence ID" value="AT5G67100.2"/>
    <property type="gene ID" value="AT5G67100"/>
</dbReference>
<dbReference type="GeneID" id="836845"/>
<dbReference type="Gramene" id="AT5G67100.1">
    <property type="protein sequence ID" value="AT5G67100.1"/>
    <property type="gene ID" value="AT5G67100"/>
</dbReference>
<dbReference type="Gramene" id="AT5G67100.2">
    <property type="protein sequence ID" value="AT5G67100.2"/>
    <property type="gene ID" value="AT5G67100"/>
</dbReference>
<dbReference type="KEGG" id="ath:AT5G67100"/>
<dbReference type="Araport" id="AT5G67100"/>
<dbReference type="TAIR" id="AT5G67100">
    <property type="gene designation" value="ICU2"/>
</dbReference>
<dbReference type="eggNOG" id="KOG0970">
    <property type="taxonomic scope" value="Eukaryota"/>
</dbReference>
<dbReference type="HOGENOM" id="CLU_001718_0_1_1"/>
<dbReference type="InParanoid" id="Q9FHA3"/>
<dbReference type="OMA" id="MTKMNVG"/>
<dbReference type="PRO" id="PR:Q9FHA3"/>
<dbReference type="Proteomes" id="UP000006548">
    <property type="component" value="Chromosome 5"/>
</dbReference>
<dbReference type="ExpressionAtlas" id="Q9FHA3">
    <property type="expression patterns" value="baseline and differential"/>
</dbReference>
<dbReference type="GO" id="GO:0005634">
    <property type="term" value="C:nucleus"/>
    <property type="evidence" value="ECO:0007669"/>
    <property type="project" value="UniProtKB-SubCell"/>
</dbReference>
<dbReference type="GO" id="GO:0003677">
    <property type="term" value="F:DNA binding"/>
    <property type="evidence" value="ECO:0007669"/>
    <property type="project" value="UniProtKB-KW"/>
</dbReference>
<dbReference type="GO" id="GO:0003887">
    <property type="term" value="F:DNA-directed DNA polymerase activity"/>
    <property type="evidence" value="ECO:0000304"/>
    <property type="project" value="TAIR"/>
</dbReference>
<dbReference type="GO" id="GO:0003899">
    <property type="term" value="F:DNA-directed RNA polymerase activity"/>
    <property type="evidence" value="ECO:0007669"/>
    <property type="project" value="EnsemblPlants"/>
</dbReference>
<dbReference type="GO" id="GO:0000166">
    <property type="term" value="F:nucleotide binding"/>
    <property type="evidence" value="ECO:0007669"/>
    <property type="project" value="InterPro"/>
</dbReference>
<dbReference type="GO" id="GO:0008270">
    <property type="term" value="F:zinc ion binding"/>
    <property type="evidence" value="ECO:0007669"/>
    <property type="project" value="UniProtKB-KW"/>
</dbReference>
<dbReference type="GO" id="GO:0006273">
    <property type="term" value="P:lagging strand elongation"/>
    <property type="evidence" value="ECO:0007669"/>
    <property type="project" value="EnsemblPlants"/>
</dbReference>
<dbReference type="GO" id="GO:0009965">
    <property type="term" value="P:leaf morphogenesis"/>
    <property type="evidence" value="ECO:0000315"/>
    <property type="project" value="TAIR"/>
</dbReference>
<dbReference type="GO" id="GO:1902975">
    <property type="term" value="P:mitotic DNA replication initiation"/>
    <property type="evidence" value="ECO:0007669"/>
    <property type="project" value="InterPro"/>
</dbReference>
<dbReference type="CDD" id="cd05776">
    <property type="entry name" value="DNA_polB_alpha_exo"/>
    <property type="match status" value="1"/>
</dbReference>
<dbReference type="CDD" id="cd05532">
    <property type="entry name" value="POLBc_alpha"/>
    <property type="match status" value="1"/>
</dbReference>
<dbReference type="FunFam" id="1.10.132.60:FF:000004">
    <property type="entry name" value="DNA polymerase"/>
    <property type="match status" value="1"/>
</dbReference>
<dbReference type="FunFam" id="1.10.287.690:FF:000014">
    <property type="entry name" value="DNA polymerase"/>
    <property type="match status" value="1"/>
</dbReference>
<dbReference type="FunFam" id="1.10.3200.20:FF:000003">
    <property type="entry name" value="DNA polymerase"/>
    <property type="match status" value="1"/>
</dbReference>
<dbReference type="FunFam" id="3.30.420.10:FF:000043">
    <property type="entry name" value="DNA polymerase"/>
    <property type="match status" value="1"/>
</dbReference>
<dbReference type="FunFam" id="3.30.70.2820:FF:000002">
    <property type="entry name" value="DNA polymerase"/>
    <property type="match status" value="1"/>
</dbReference>
<dbReference type="Gene3D" id="2.40.50.730">
    <property type="match status" value="1"/>
</dbReference>
<dbReference type="Gene3D" id="3.30.70.2820">
    <property type="match status" value="1"/>
</dbReference>
<dbReference type="Gene3D" id="1.10.3200.20">
    <property type="entry name" value="DNA Polymerase alpha, zinc finger"/>
    <property type="match status" value="1"/>
</dbReference>
<dbReference type="Gene3D" id="1.10.132.60">
    <property type="entry name" value="DNA polymerase family B, C-terminal domain"/>
    <property type="match status" value="1"/>
</dbReference>
<dbReference type="Gene3D" id="1.10.287.690">
    <property type="entry name" value="Helix hairpin bin"/>
    <property type="match status" value="1"/>
</dbReference>
<dbReference type="Gene3D" id="3.90.1600.10">
    <property type="entry name" value="Palm domain of DNA polymerase"/>
    <property type="match status" value="1"/>
</dbReference>
<dbReference type="Gene3D" id="3.30.420.10">
    <property type="entry name" value="Ribonuclease H-like superfamily/Ribonuclease H"/>
    <property type="match status" value="1"/>
</dbReference>
<dbReference type="InterPro" id="IPR006172">
    <property type="entry name" value="DNA-dir_DNA_pol_B"/>
</dbReference>
<dbReference type="InterPro" id="IPR017964">
    <property type="entry name" value="DNA-dir_DNA_pol_B_CS"/>
</dbReference>
<dbReference type="InterPro" id="IPR006133">
    <property type="entry name" value="DNA-dir_DNA_pol_B_exonuc"/>
</dbReference>
<dbReference type="InterPro" id="IPR006134">
    <property type="entry name" value="DNA-dir_DNA_pol_B_multi_dom"/>
</dbReference>
<dbReference type="InterPro" id="IPR043502">
    <property type="entry name" value="DNA/RNA_pol_sf"/>
</dbReference>
<dbReference type="InterPro" id="IPR024647">
    <property type="entry name" value="DNA_pol_a_cat_su_N"/>
</dbReference>
<dbReference type="InterPro" id="IPR042087">
    <property type="entry name" value="DNA_pol_B_thumb"/>
</dbReference>
<dbReference type="InterPro" id="IPR023211">
    <property type="entry name" value="DNA_pol_palm_dom_sf"/>
</dbReference>
<dbReference type="InterPro" id="IPR038256">
    <property type="entry name" value="Pol_alpha_znc_sf"/>
</dbReference>
<dbReference type="InterPro" id="IPR045846">
    <property type="entry name" value="POLBc_alpha"/>
</dbReference>
<dbReference type="InterPro" id="IPR012337">
    <property type="entry name" value="RNaseH-like_sf"/>
</dbReference>
<dbReference type="InterPro" id="IPR036397">
    <property type="entry name" value="RNaseH_sf"/>
</dbReference>
<dbReference type="InterPro" id="IPR015088">
    <property type="entry name" value="Znf_DNA-dir_DNA_pol_B_alpha"/>
</dbReference>
<dbReference type="NCBIfam" id="TIGR00592">
    <property type="entry name" value="pol2"/>
    <property type="match status" value="1"/>
</dbReference>
<dbReference type="PANTHER" id="PTHR45861">
    <property type="entry name" value="DNA POLYMERASE ALPHA CATALYTIC SUBUNIT"/>
    <property type="match status" value="1"/>
</dbReference>
<dbReference type="PANTHER" id="PTHR45861:SF1">
    <property type="entry name" value="DNA POLYMERASE ALPHA CATALYTIC SUBUNIT"/>
    <property type="match status" value="1"/>
</dbReference>
<dbReference type="Pfam" id="PF12254">
    <property type="entry name" value="DNA_pol_alpha_N"/>
    <property type="match status" value="1"/>
</dbReference>
<dbReference type="Pfam" id="PF00136">
    <property type="entry name" value="DNA_pol_B"/>
    <property type="match status" value="1"/>
</dbReference>
<dbReference type="Pfam" id="PF03104">
    <property type="entry name" value="DNA_pol_B_exo1"/>
    <property type="match status" value="1"/>
</dbReference>
<dbReference type="Pfam" id="PF08996">
    <property type="entry name" value="zf-DNA_Pol"/>
    <property type="match status" value="1"/>
</dbReference>
<dbReference type="PRINTS" id="PR00106">
    <property type="entry name" value="DNAPOLB"/>
</dbReference>
<dbReference type="SMART" id="SM00486">
    <property type="entry name" value="POLBc"/>
    <property type="match status" value="1"/>
</dbReference>
<dbReference type="SUPFAM" id="SSF56672">
    <property type="entry name" value="DNA/RNA polymerases"/>
    <property type="match status" value="1"/>
</dbReference>
<dbReference type="SUPFAM" id="SSF53098">
    <property type="entry name" value="Ribonuclease H-like"/>
    <property type="match status" value="1"/>
</dbReference>
<dbReference type="PROSITE" id="PS00116">
    <property type="entry name" value="DNA_POLYMERASE_B"/>
    <property type="match status" value="1"/>
</dbReference>